<comment type="function">
    <text evidence="1">Dimethylates a single guanine residue at position 26 of a number of tRNAs using S-adenosyl-L-methionine as donor of the methyl groups.</text>
</comment>
<comment type="catalytic activity">
    <reaction evidence="1">
        <text>guanosine(26) in tRNA + 2 S-adenosyl-L-methionine = N(2)-dimethylguanosine(26) in tRNA + 2 S-adenosyl-L-homocysteine + 2 H(+)</text>
        <dbReference type="Rhea" id="RHEA:43140"/>
        <dbReference type="Rhea" id="RHEA-COMP:10359"/>
        <dbReference type="Rhea" id="RHEA-COMP:10360"/>
        <dbReference type="ChEBI" id="CHEBI:15378"/>
        <dbReference type="ChEBI" id="CHEBI:57856"/>
        <dbReference type="ChEBI" id="CHEBI:59789"/>
        <dbReference type="ChEBI" id="CHEBI:74269"/>
        <dbReference type="ChEBI" id="CHEBI:74513"/>
        <dbReference type="EC" id="2.1.1.216"/>
    </reaction>
</comment>
<comment type="similarity">
    <text evidence="1">Belongs to the class I-like SAM-binding methyltransferase superfamily. Trm1 family.</text>
</comment>
<name>TRM1_METST</name>
<reference key="1">
    <citation type="journal article" date="2006" name="J. Bacteriol.">
        <title>The genome sequence of Methanosphaera stadtmanae reveals why this human intestinal archaeon is restricted to methanol and H2 for methane formation and ATP synthesis.</title>
        <authorList>
            <person name="Fricke W.F."/>
            <person name="Seedorf H."/>
            <person name="Henne A."/>
            <person name="Kruer M."/>
            <person name="Liesegang H."/>
            <person name="Hedderich R."/>
            <person name="Gottschalk G."/>
            <person name="Thauer R.K."/>
        </authorList>
    </citation>
    <scope>NUCLEOTIDE SEQUENCE [LARGE SCALE GENOMIC DNA]</scope>
    <source>
        <strain>ATCC 43021 / DSM 3091 / JCM 11832 / MCB-3</strain>
    </source>
</reference>
<keyword id="KW-0479">Metal-binding</keyword>
<keyword id="KW-0489">Methyltransferase</keyword>
<keyword id="KW-1185">Reference proteome</keyword>
<keyword id="KW-0694">RNA-binding</keyword>
<keyword id="KW-0949">S-adenosyl-L-methionine</keyword>
<keyword id="KW-0808">Transferase</keyword>
<keyword id="KW-0819">tRNA processing</keyword>
<keyword id="KW-0820">tRNA-binding</keyword>
<keyword id="KW-0862">Zinc</keyword>
<evidence type="ECO:0000255" key="1">
    <source>
        <dbReference type="HAMAP-Rule" id="MF_00290"/>
    </source>
</evidence>
<feature type="chain" id="PRO_0000259376" description="tRNA (guanine(26)-N(2))-dimethyltransferase">
    <location>
        <begin position="1"/>
        <end position="390"/>
    </location>
</feature>
<feature type="domain" description="Trm1 methyltransferase" evidence="1">
    <location>
        <begin position="4"/>
        <end position="378"/>
    </location>
</feature>
<feature type="binding site" evidence="1">
    <location>
        <position position="37"/>
    </location>
    <ligand>
        <name>S-adenosyl-L-methionine</name>
        <dbReference type="ChEBI" id="CHEBI:59789"/>
    </ligand>
</feature>
<feature type="binding site" evidence="1">
    <location>
        <position position="67"/>
    </location>
    <ligand>
        <name>S-adenosyl-L-methionine</name>
        <dbReference type="ChEBI" id="CHEBI:59789"/>
    </ligand>
</feature>
<feature type="binding site" evidence="1">
    <location>
        <position position="85"/>
    </location>
    <ligand>
        <name>S-adenosyl-L-methionine</name>
        <dbReference type="ChEBI" id="CHEBI:59789"/>
    </ligand>
</feature>
<feature type="binding site" evidence="1">
    <location>
        <position position="112"/>
    </location>
    <ligand>
        <name>S-adenosyl-L-methionine</name>
        <dbReference type="ChEBI" id="CHEBI:59789"/>
    </ligand>
</feature>
<feature type="binding site" evidence="1">
    <location>
        <position position="113"/>
    </location>
    <ligand>
        <name>S-adenosyl-L-methionine</name>
        <dbReference type="ChEBI" id="CHEBI:59789"/>
    </ligand>
</feature>
<feature type="binding site" evidence="1">
    <location>
        <position position="245"/>
    </location>
    <ligand>
        <name>Zn(2+)</name>
        <dbReference type="ChEBI" id="CHEBI:29105"/>
    </ligand>
</feature>
<feature type="binding site" evidence="1">
    <location>
        <position position="248"/>
    </location>
    <ligand>
        <name>Zn(2+)</name>
        <dbReference type="ChEBI" id="CHEBI:29105"/>
    </ligand>
</feature>
<feature type="binding site" evidence="1">
    <location>
        <position position="265"/>
    </location>
    <ligand>
        <name>Zn(2+)</name>
        <dbReference type="ChEBI" id="CHEBI:29105"/>
    </ligand>
</feature>
<feature type="binding site" evidence="1">
    <location>
        <position position="268"/>
    </location>
    <ligand>
        <name>Zn(2+)</name>
        <dbReference type="ChEBI" id="CHEBI:29105"/>
    </ligand>
</feature>
<dbReference type="EC" id="2.1.1.216" evidence="1"/>
<dbReference type="EMBL" id="CP000102">
    <property type="protein sequence ID" value="ABC56701.1"/>
    <property type="molecule type" value="Genomic_DNA"/>
</dbReference>
<dbReference type="RefSeq" id="WP_011405901.1">
    <property type="nucleotide sequence ID" value="NC_007681.1"/>
</dbReference>
<dbReference type="SMR" id="Q2NI56"/>
<dbReference type="STRING" id="339860.Msp_0291"/>
<dbReference type="KEGG" id="mst:Msp_0291"/>
<dbReference type="eggNOG" id="arCOG01219">
    <property type="taxonomic scope" value="Archaea"/>
</dbReference>
<dbReference type="HOGENOM" id="CLU_010862_5_1_2"/>
<dbReference type="OrthoDB" id="372177at2157"/>
<dbReference type="Proteomes" id="UP000001931">
    <property type="component" value="Chromosome"/>
</dbReference>
<dbReference type="GO" id="GO:0160104">
    <property type="term" value="F:tRNA (guanine(26)-N2)-dimethyltransferase activity"/>
    <property type="evidence" value="ECO:0007669"/>
    <property type="project" value="UniProtKB-UniRule"/>
</dbReference>
<dbReference type="GO" id="GO:0000049">
    <property type="term" value="F:tRNA binding"/>
    <property type="evidence" value="ECO:0007669"/>
    <property type="project" value="UniProtKB-KW"/>
</dbReference>
<dbReference type="GO" id="GO:0002940">
    <property type="term" value="P:tRNA N2-guanine methylation"/>
    <property type="evidence" value="ECO:0007669"/>
    <property type="project" value="TreeGrafter"/>
</dbReference>
<dbReference type="CDD" id="cd02440">
    <property type="entry name" value="AdoMet_MTases"/>
    <property type="match status" value="1"/>
</dbReference>
<dbReference type="FunFam" id="3.40.50.150:FF:000272">
    <property type="entry name" value="tRNA (guanine(26)-N(2))-dimethyltransferase"/>
    <property type="match status" value="1"/>
</dbReference>
<dbReference type="Gene3D" id="3.30.56.70">
    <property type="entry name" value="N2,N2-dimethylguanosine tRNA methyltransferase, C-terminal domain"/>
    <property type="match status" value="1"/>
</dbReference>
<dbReference type="Gene3D" id="3.40.50.150">
    <property type="entry name" value="Vaccinia Virus protein VP39"/>
    <property type="match status" value="1"/>
</dbReference>
<dbReference type="HAMAP" id="MF_00290">
    <property type="entry name" value="tRNA_dimethyltr_TRM1"/>
    <property type="match status" value="1"/>
</dbReference>
<dbReference type="InterPro" id="IPR029063">
    <property type="entry name" value="SAM-dependent_MTases_sf"/>
</dbReference>
<dbReference type="InterPro" id="IPR002905">
    <property type="entry name" value="Trm1"/>
</dbReference>
<dbReference type="InterPro" id="IPR022923">
    <property type="entry name" value="TRM1_arc_bac"/>
</dbReference>
<dbReference type="InterPro" id="IPR042296">
    <property type="entry name" value="tRNA_met_Trm1_C"/>
</dbReference>
<dbReference type="NCBIfam" id="TIGR00308">
    <property type="entry name" value="TRM1"/>
    <property type="match status" value="1"/>
</dbReference>
<dbReference type="PANTHER" id="PTHR10631">
    <property type="entry name" value="N 2 ,N 2 -DIMETHYLGUANOSINE TRNA METHYLTRANSFERASE"/>
    <property type="match status" value="1"/>
</dbReference>
<dbReference type="PANTHER" id="PTHR10631:SF3">
    <property type="entry name" value="TRNA (GUANINE(26)-N(2))-DIMETHYLTRANSFERASE"/>
    <property type="match status" value="1"/>
</dbReference>
<dbReference type="Pfam" id="PF02005">
    <property type="entry name" value="TRM"/>
    <property type="match status" value="1"/>
</dbReference>
<dbReference type="SUPFAM" id="SSF53335">
    <property type="entry name" value="S-adenosyl-L-methionine-dependent methyltransferases"/>
    <property type="match status" value="1"/>
</dbReference>
<dbReference type="PROSITE" id="PS51626">
    <property type="entry name" value="SAM_MT_TRM1"/>
    <property type="match status" value="1"/>
</dbReference>
<gene>
    <name evidence="1" type="primary">trm1</name>
    <name type="ordered locus">Msp_0291</name>
</gene>
<organism>
    <name type="scientific">Methanosphaera stadtmanae (strain ATCC 43021 / DSM 3091 / JCM 11832 / MCB-3)</name>
    <dbReference type="NCBI Taxonomy" id="339860"/>
    <lineage>
        <taxon>Archaea</taxon>
        <taxon>Methanobacteriati</taxon>
        <taxon>Methanobacteriota</taxon>
        <taxon>Methanomada group</taxon>
        <taxon>Methanobacteria</taxon>
        <taxon>Methanobacteriales</taxon>
        <taxon>Methanobacteriaceae</taxon>
        <taxon>Methanosphaera</taxon>
    </lineage>
</organism>
<proteinExistence type="inferred from homology"/>
<sequence>MDTHIIEEGLVKIEVPDFEKVSAKAPVFYNPVMEMNRDISVAVINQYRKEVDHDISICDAFGGTGIRGARYSKEIHGVEKVVVGDVNPLAVEISKKNMQLNNISNVEVQKNDANILLQSNKGLFDVVDIDPFGTPAMFTQSTAANIRPGGLICISATDTSALCGTYHDPCLRKYGAKPLKTEYCHENGIRILIAFISRNLAVNQKYLHVLFSHSTEHYMRVYAIVKRGGKKTNKALDNIGFIAHCPNCLHRETTYGFAPKIPHTCPECGGEYDVAGPLWLGKIWDKEFIYNTMELVKNLNLNKKDDLMSLFEKCYMEADGPVTFYDIHKICKKLKISSPKINDVMDEIRNRGYFISRTHFKLTGMRTDMPLDELKQLILDIKEDKLGPEK</sequence>
<accession>Q2NI56</accession>
<protein>
    <recommendedName>
        <fullName evidence="1">tRNA (guanine(26)-N(2))-dimethyltransferase</fullName>
        <ecNumber evidence="1">2.1.1.216</ecNumber>
    </recommendedName>
    <alternativeName>
        <fullName evidence="1">tRNA 2,2-dimethylguanosine-26 methyltransferase</fullName>
    </alternativeName>
    <alternativeName>
        <fullName evidence="1">tRNA(guanine-26,N(2)-N(2)) methyltransferase</fullName>
    </alternativeName>
    <alternativeName>
        <fullName evidence="1">tRNA(m(2,2)G26)dimethyltransferase</fullName>
    </alternativeName>
</protein>